<name>YR623_MIMIV</name>
<proteinExistence type="predicted"/>
<reference key="1">
    <citation type="journal article" date="2004" name="Science">
        <title>The 1.2-megabase genome sequence of Mimivirus.</title>
        <authorList>
            <person name="Raoult D."/>
            <person name="Audic S."/>
            <person name="Robert C."/>
            <person name="Abergel C."/>
            <person name="Renesto P."/>
            <person name="Ogata H."/>
            <person name="La Scola B."/>
            <person name="Susan M."/>
            <person name="Claverie J.-M."/>
        </authorList>
    </citation>
    <scope>NUCLEOTIDE SEQUENCE [LARGE SCALE GENOMIC DNA]</scope>
    <source>
        <strain>Rowbotham-Bradford</strain>
    </source>
</reference>
<dbReference type="EMBL" id="AY653733">
    <property type="protein sequence ID" value="AAV50884.1"/>
    <property type="molecule type" value="Genomic_DNA"/>
</dbReference>
<dbReference type="KEGG" id="vg:9925264"/>
<dbReference type="OrthoDB" id="30314at10239"/>
<dbReference type="Proteomes" id="UP000001134">
    <property type="component" value="Genome"/>
</dbReference>
<dbReference type="Gene3D" id="2.60.120.40">
    <property type="match status" value="1"/>
</dbReference>
<dbReference type="InterPro" id="IPR008983">
    <property type="entry name" value="Tumour_necrosis_fac-like_dom"/>
</dbReference>
<dbReference type="SUPFAM" id="SSF49842">
    <property type="entry name" value="TNF-like"/>
    <property type="match status" value="1"/>
</dbReference>
<protein>
    <recommendedName>
        <fullName>Uncharacterized protein R623</fullName>
    </recommendedName>
</protein>
<organismHost>
    <name type="scientific">Acanthamoeba polyphaga</name>
    <name type="common">Amoeba</name>
    <dbReference type="NCBI Taxonomy" id="5757"/>
</organismHost>
<gene>
    <name type="ordered locus">MIMI_R623</name>
</gene>
<accession>Q5UR73</accession>
<organism>
    <name type="scientific">Acanthamoeba polyphaga mimivirus</name>
    <name type="common">APMV</name>
    <dbReference type="NCBI Taxonomy" id="212035"/>
    <lineage>
        <taxon>Viruses</taxon>
        <taxon>Varidnaviria</taxon>
        <taxon>Bamfordvirae</taxon>
        <taxon>Nucleocytoviricota</taxon>
        <taxon>Megaviricetes</taxon>
        <taxon>Imitervirales</taxon>
        <taxon>Mimiviridae</taxon>
        <taxon>Megamimivirinae</taxon>
        <taxon>Mimivirus</taxon>
        <taxon>Mimivirus bradfordmassiliense</taxon>
    </lineage>
</organism>
<sequence length="269" mass="28906">MSVSRKRIDHCNDCANKNGSGWRIVNVKDVTYRKERCSDVFKHEPRCQCGCQDKHHDRHDPCVPDECSKTDKQLTIVSAVNPTSNLIIPEAGVLPVPVNNVILNGWTLTTPDLLNSFNPSTGIFTATESGDYEINLVLSFKSSAFLNATENLSNVPQVSIIDAATGLPLNEAIQGFPTTSSQVVVDVPVVPPIPVLVTVTSVLGVGQISLSIIISLSAGQQVEILVSSNGLSHIPSSFPVGPATFTFNTGTSLIVKKVRNIPKVIYSLC</sequence>
<feature type="chain" id="PRO_0000253427" description="Uncharacterized protein R623">
    <location>
        <begin position="1"/>
        <end position="269"/>
    </location>
</feature>
<keyword id="KW-1185">Reference proteome</keyword>